<keyword id="KW-1003">Cell membrane</keyword>
<keyword id="KW-0204">Cytolysis</keyword>
<keyword id="KW-0472">Membrane</keyword>
<keyword id="KW-0812">Transmembrane</keyword>
<keyword id="KW-1133">Transmembrane helix</keyword>
<accession>Q2FK08</accession>
<sequence length="147" mass="15780">MVVKQQKDASKPAHFFHQVIVIALVLFVSKIIESFMPIPMPASVIGLVLLFVLLCTGAVKLGEVEKVGTTLTNNIGLLFVPAGISVVNSLGVISQAPFLIIGLIIVSTILLLICTGYVTQIIMKVTSRSKGDKVTKKIKIEEAQAHD</sequence>
<dbReference type="EMBL" id="CP000255">
    <property type="protein sequence ID" value="ABD22157.1"/>
    <property type="molecule type" value="Genomic_DNA"/>
</dbReference>
<dbReference type="RefSeq" id="WP_001792906.1">
    <property type="nucleotide sequence ID" value="NZ_CP027476.1"/>
</dbReference>
<dbReference type="SMR" id="Q2FK08"/>
<dbReference type="KEGG" id="saa:SAUSA300_0256"/>
<dbReference type="HOGENOM" id="CLU_113736_0_1_9"/>
<dbReference type="OMA" id="TGWMTQL"/>
<dbReference type="Proteomes" id="UP000001939">
    <property type="component" value="Chromosome"/>
</dbReference>
<dbReference type="GO" id="GO:0005886">
    <property type="term" value="C:plasma membrane"/>
    <property type="evidence" value="ECO:0007669"/>
    <property type="project" value="UniProtKB-SubCell"/>
</dbReference>
<dbReference type="GO" id="GO:0019835">
    <property type="term" value="P:cytolysis"/>
    <property type="evidence" value="ECO:0007669"/>
    <property type="project" value="UniProtKB-UniRule"/>
</dbReference>
<dbReference type="GO" id="GO:0031640">
    <property type="term" value="P:killing of cells of another organism"/>
    <property type="evidence" value="ECO:0007669"/>
    <property type="project" value="UniProtKB-KW"/>
</dbReference>
<dbReference type="GO" id="GO:0012501">
    <property type="term" value="P:programmed cell death"/>
    <property type="evidence" value="ECO:0007669"/>
    <property type="project" value="UniProtKB-UniRule"/>
</dbReference>
<dbReference type="HAMAP" id="MF_01141">
    <property type="entry name" value="LrgA"/>
    <property type="match status" value="1"/>
</dbReference>
<dbReference type="InterPro" id="IPR023736">
    <property type="entry name" value="Antiholin-like_LrgA"/>
</dbReference>
<dbReference type="InterPro" id="IPR005538">
    <property type="entry name" value="LrgA/CidA"/>
</dbReference>
<dbReference type="NCBIfam" id="NF003155">
    <property type="entry name" value="PRK04125.1"/>
    <property type="match status" value="1"/>
</dbReference>
<dbReference type="PANTHER" id="PTHR33931:SF4">
    <property type="entry name" value="ANTIHOLIN-LIKE PROTEIN LRGA"/>
    <property type="match status" value="1"/>
</dbReference>
<dbReference type="PANTHER" id="PTHR33931">
    <property type="entry name" value="HOLIN-LIKE PROTEIN CIDA-RELATED"/>
    <property type="match status" value="1"/>
</dbReference>
<dbReference type="Pfam" id="PF03788">
    <property type="entry name" value="LrgA"/>
    <property type="match status" value="1"/>
</dbReference>
<gene>
    <name evidence="1" type="primary">lrgA</name>
    <name type="ordered locus">SAUSA300_0256</name>
</gene>
<feature type="chain" id="PRO_1000065437" description="Antiholin-like protein LrgA">
    <location>
        <begin position="1"/>
        <end position="147"/>
    </location>
</feature>
<feature type="transmembrane region" description="Helical" evidence="1">
    <location>
        <begin position="12"/>
        <end position="32"/>
    </location>
</feature>
<feature type="transmembrane region" description="Helical" evidence="1">
    <location>
        <begin position="35"/>
        <end position="55"/>
    </location>
</feature>
<feature type="transmembrane region" description="Helical" evidence="1">
    <location>
        <begin position="74"/>
        <end position="94"/>
    </location>
</feature>
<feature type="transmembrane region" description="Helical" evidence="1">
    <location>
        <begin position="98"/>
        <end position="118"/>
    </location>
</feature>
<protein>
    <recommendedName>
        <fullName evidence="1">Antiholin-like protein LrgA</fullName>
    </recommendedName>
</protein>
<name>LRGA_STAA3</name>
<evidence type="ECO:0000255" key="1">
    <source>
        <dbReference type="HAMAP-Rule" id="MF_01141"/>
    </source>
</evidence>
<comment type="function">
    <text evidence="1">Inhibits the expression or activity of extracellular murein hydrolases by interacting, possibly with LrgB, with the holin-like proteins CidA and/or CidB. The LrgAB and CidAB proteins may affect the proton motive force of the membrane. May be involved in programmed cell death (PCD), possibly triggering PCD in response to antibiotics and environmental stresses.</text>
</comment>
<comment type="subcellular location">
    <subcellularLocation>
        <location evidence="1">Cell membrane</location>
        <topology evidence="1">Multi-pass membrane protein</topology>
    </subcellularLocation>
</comment>
<comment type="similarity">
    <text evidence="1">Belongs to the CidA/LrgA family. LrgA subfamily.</text>
</comment>
<organism>
    <name type="scientific">Staphylococcus aureus (strain USA300)</name>
    <dbReference type="NCBI Taxonomy" id="367830"/>
    <lineage>
        <taxon>Bacteria</taxon>
        <taxon>Bacillati</taxon>
        <taxon>Bacillota</taxon>
        <taxon>Bacilli</taxon>
        <taxon>Bacillales</taxon>
        <taxon>Staphylococcaceae</taxon>
        <taxon>Staphylococcus</taxon>
    </lineage>
</organism>
<reference key="1">
    <citation type="journal article" date="2006" name="Lancet">
        <title>Complete genome sequence of USA300, an epidemic clone of community-acquired meticillin-resistant Staphylococcus aureus.</title>
        <authorList>
            <person name="Diep B.A."/>
            <person name="Gill S.R."/>
            <person name="Chang R.F."/>
            <person name="Phan T.H."/>
            <person name="Chen J.H."/>
            <person name="Davidson M.G."/>
            <person name="Lin F."/>
            <person name="Lin J."/>
            <person name="Carleton H.A."/>
            <person name="Mongodin E.F."/>
            <person name="Sensabaugh G.F."/>
            <person name="Perdreau-Remington F."/>
        </authorList>
    </citation>
    <scope>NUCLEOTIDE SEQUENCE [LARGE SCALE GENOMIC DNA]</scope>
    <source>
        <strain>USA300</strain>
    </source>
</reference>
<proteinExistence type="inferred from homology"/>